<dbReference type="EC" id="2.3.2.27" evidence="5 6"/>
<dbReference type="EMBL" id="AE014297">
    <property type="protein sequence ID" value="AAF54124.1"/>
    <property type="molecule type" value="Genomic_DNA"/>
</dbReference>
<dbReference type="EMBL" id="AE014297">
    <property type="protein sequence ID" value="AAN13375.1"/>
    <property type="molecule type" value="Genomic_DNA"/>
</dbReference>
<dbReference type="EMBL" id="AE014297">
    <property type="protein sequence ID" value="AAN13376.1"/>
    <property type="molecule type" value="Genomic_DNA"/>
</dbReference>
<dbReference type="EMBL" id="AE014297">
    <property type="protein sequence ID" value="ABW08609.1"/>
    <property type="molecule type" value="Genomic_DNA"/>
</dbReference>
<dbReference type="EMBL" id="BT133094">
    <property type="protein sequence ID" value="AEX98014.1"/>
    <property type="molecule type" value="mRNA"/>
</dbReference>
<dbReference type="EMBL" id="AY069479">
    <property type="protein sequence ID" value="AAL39624.1"/>
    <property type="molecule type" value="mRNA"/>
</dbReference>
<dbReference type="RefSeq" id="NP_001097695.1">
    <property type="nucleotide sequence ID" value="NM_001104225.2"/>
</dbReference>
<dbReference type="RefSeq" id="NP_649653.1">
    <property type="nucleotide sequence ID" value="NM_141396.4"/>
</dbReference>
<dbReference type="RefSeq" id="NP_731079.1">
    <property type="nucleotide sequence ID" value="NM_169139.2"/>
</dbReference>
<dbReference type="RefSeq" id="NP_731080.1">
    <property type="nucleotide sequence ID" value="NM_169140.2"/>
</dbReference>
<dbReference type="SMR" id="Q9VI20"/>
<dbReference type="FunCoup" id="Q9VI20">
    <property type="interactions" value="1386"/>
</dbReference>
<dbReference type="IntAct" id="Q9VI20">
    <property type="interactions" value="3"/>
</dbReference>
<dbReference type="MINT" id="Q9VI20"/>
<dbReference type="STRING" id="7227.FBpp0081218"/>
<dbReference type="GlyCosmos" id="Q9VI20">
    <property type="glycosylation" value="2 sites, No reported glycans"/>
</dbReference>
<dbReference type="GlyGen" id="Q9VI20">
    <property type="glycosylation" value="2 sites"/>
</dbReference>
<dbReference type="PaxDb" id="7227-FBpp0081218"/>
<dbReference type="EnsemblMetazoa" id="FBtr0081720">
    <property type="protein sequence ID" value="FBpp0081217"/>
    <property type="gene ID" value="FBgn0037442"/>
</dbReference>
<dbReference type="EnsemblMetazoa" id="FBtr0081721">
    <property type="protein sequence ID" value="FBpp0081218"/>
    <property type="gene ID" value="FBgn0037442"/>
</dbReference>
<dbReference type="EnsemblMetazoa" id="FBtr0081722">
    <property type="protein sequence ID" value="FBpp0081219"/>
    <property type="gene ID" value="FBgn0037442"/>
</dbReference>
<dbReference type="EnsemblMetazoa" id="FBtr0113198">
    <property type="protein sequence ID" value="FBpp0112110"/>
    <property type="gene ID" value="FBgn0037442"/>
</dbReference>
<dbReference type="GeneID" id="40791"/>
<dbReference type="KEGG" id="dme:Dmel_CG10277"/>
<dbReference type="UCSC" id="CG10277-RA">
    <property type="organism name" value="d. melanogaster"/>
</dbReference>
<dbReference type="AGR" id="FB:FBgn0037442"/>
<dbReference type="CTD" id="40791"/>
<dbReference type="FlyBase" id="FBgn0037442">
    <property type="gene designation" value="gzl"/>
</dbReference>
<dbReference type="VEuPathDB" id="VectorBase:FBgn0037442"/>
<dbReference type="eggNOG" id="KOG4628">
    <property type="taxonomic scope" value="Eukaryota"/>
</dbReference>
<dbReference type="GeneTree" id="ENSGT00940000159671"/>
<dbReference type="HOGENOM" id="CLU_035275_5_0_1"/>
<dbReference type="InParanoid" id="Q9VI20"/>
<dbReference type="OMA" id="TIKYETC"/>
<dbReference type="OrthoDB" id="8062037at2759"/>
<dbReference type="UniPathway" id="UPA00143"/>
<dbReference type="BioGRID-ORCS" id="40791">
    <property type="hits" value="1 hit in 3 CRISPR screens"/>
</dbReference>
<dbReference type="GenomeRNAi" id="40791"/>
<dbReference type="PRO" id="PR:Q9VI20"/>
<dbReference type="Proteomes" id="UP000000803">
    <property type="component" value="Chromosome 3R"/>
</dbReference>
<dbReference type="Bgee" id="FBgn0037442">
    <property type="expression patterns" value="Expressed in oviduct (Drosophila) and 262 other cell types or tissues"/>
</dbReference>
<dbReference type="ExpressionAtlas" id="Q9VI20">
    <property type="expression patterns" value="baseline and differential"/>
</dbReference>
<dbReference type="GO" id="GO:0005737">
    <property type="term" value="C:cytoplasm"/>
    <property type="evidence" value="ECO:0000318"/>
    <property type="project" value="GO_Central"/>
</dbReference>
<dbReference type="GO" id="GO:0005768">
    <property type="term" value="C:endosome"/>
    <property type="evidence" value="ECO:0000314"/>
    <property type="project" value="FlyBase"/>
</dbReference>
<dbReference type="GO" id="GO:0010008">
    <property type="term" value="C:endosome membrane"/>
    <property type="evidence" value="ECO:0007669"/>
    <property type="project" value="UniProtKB-SubCell"/>
</dbReference>
<dbReference type="GO" id="GO:0061630">
    <property type="term" value="F:ubiquitin protein ligase activity"/>
    <property type="evidence" value="ECO:0000314"/>
    <property type="project" value="UniProtKB"/>
</dbReference>
<dbReference type="GO" id="GO:0008270">
    <property type="term" value="F:zinc ion binding"/>
    <property type="evidence" value="ECO:0000255"/>
    <property type="project" value="FlyBase"/>
</dbReference>
<dbReference type="GO" id="GO:0016197">
    <property type="term" value="P:endosomal transport"/>
    <property type="evidence" value="ECO:0000315"/>
    <property type="project" value="FlyBase"/>
</dbReference>
<dbReference type="GO" id="GO:1904300">
    <property type="term" value="P:positive regulation of transcytosis"/>
    <property type="evidence" value="ECO:0000314"/>
    <property type="project" value="UniProtKB"/>
</dbReference>
<dbReference type="GO" id="GO:0016567">
    <property type="term" value="P:protein ubiquitination"/>
    <property type="evidence" value="ECO:0000315"/>
    <property type="project" value="FlyBase"/>
</dbReference>
<dbReference type="GO" id="GO:0006511">
    <property type="term" value="P:ubiquitin-dependent protein catabolic process"/>
    <property type="evidence" value="ECO:0000318"/>
    <property type="project" value="GO_Central"/>
</dbReference>
<dbReference type="CDD" id="cd02123">
    <property type="entry name" value="PA_C_RZF_like"/>
    <property type="match status" value="1"/>
</dbReference>
<dbReference type="CDD" id="cd16665">
    <property type="entry name" value="RING-H2_RNF13-like"/>
    <property type="match status" value="1"/>
</dbReference>
<dbReference type="FunFam" id="3.30.40.10:FF:000429">
    <property type="entry name" value="E3 ubiquitin-protein ligase RNF13"/>
    <property type="match status" value="1"/>
</dbReference>
<dbReference type="FunFam" id="3.50.30.30:FF:000026">
    <property type="entry name" value="E3 ubiquitin-protein ligase RNF13"/>
    <property type="match status" value="1"/>
</dbReference>
<dbReference type="Gene3D" id="3.50.30.30">
    <property type="match status" value="1"/>
</dbReference>
<dbReference type="Gene3D" id="3.30.40.10">
    <property type="entry name" value="Zinc/RING finger domain, C3HC4 (zinc finger)"/>
    <property type="match status" value="1"/>
</dbReference>
<dbReference type="InterPro" id="IPR051653">
    <property type="entry name" value="E3_ligase_sorting_rcpt"/>
</dbReference>
<dbReference type="InterPro" id="IPR046450">
    <property type="entry name" value="PA_dom_sf"/>
</dbReference>
<dbReference type="InterPro" id="IPR003137">
    <property type="entry name" value="PA_domain"/>
</dbReference>
<dbReference type="InterPro" id="IPR001841">
    <property type="entry name" value="Znf_RING"/>
</dbReference>
<dbReference type="InterPro" id="IPR013083">
    <property type="entry name" value="Znf_RING/FYVE/PHD"/>
</dbReference>
<dbReference type="InterPro" id="IPR044744">
    <property type="entry name" value="ZNRF4/RNF13/RNF167_PA"/>
</dbReference>
<dbReference type="PANTHER" id="PTHR47168:SF1">
    <property type="entry name" value="OS02G0798600 PROTEIN"/>
    <property type="match status" value="1"/>
</dbReference>
<dbReference type="PANTHER" id="PTHR47168">
    <property type="entry name" value="RING ZINC FINGER DOMAIN SUPERFAMILY PROTEIN-RELATED"/>
    <property type="match status" value="1"/>
</dbReference>
<dbReference type="Pfam" id="PF02225">
    <property type="entry name" value="PA"/>
    <property type="match status" value="1"/>
</dbReference>
<dbReference type="Pfam" id="PF13639">
    <property type="entry name" value="zf-RING_2"/>
    <property type="match status" value="1"/>
</dbReference>
<dbReference type="SMART" id="SM00184">
    <property type="entry name" value="RING"/>
    <property type="match status" value="1"/>
</dbReference>
<dbReference type="SUPFAM" id="SSF52025">
    <property type="entry name" value="PA domain"/>
    <property type="match status" value="1"/>
</dbReference>
<dbReference type="SUPFAM" id="SSF57850">
    <property type="entry name" value="RING/U-box"/>
    <property type="match status" value="1"/>
</dbReference>
<dbReference type="PROSITE" id="PS50089">
    <property type="entry name" value="ZF_RING_2"/>
    <property type="match status" value="1"/>
</dbReference>
<organism>
    <name type="scientific">Drosophila melanogaster</name>
    <name type="common">Fruit fly</name>
    <dbReference type="NCBI Taxonomy" id="7227"/>
    <lineage>
        <taxon>Eukaryota</taxon>
        <taxon>Metazoa</taxon>
        <taxon>Ecdysozoa</taxon>
        <taxon>Arthropoda</taxon>
        <taxon>Hexapoda</taxon>
        <taxon>Insecta</taxon>
        <taxon>Pterygota</taxon>
        <taxon>Neoptera</taxon>
        <taxon>Endopterygota</taxon>
        <taxon>Diptera</taxon>
        <taxon>Brachycera</taxon>
        <taxon>Muscomorpha</taxon>
        <taxon>Ephydroidea</taxon>
        <taxon>Drosophilidae</taxon>
        <taxon>Drosophila</taxon>
        <taxon>Sophophora</taxon>
    </lineage>
</organism>
<sequence length="536" mass="58824">MSKRSCQILTLLGLCLVCHEATLVGGHVLVYRKATSQLIEEFNDLPAQFGPNLPSNGLKVYVVPARRPYYGCDSLDRPPHLKYPPSAKFVALVARGECVFERKIRVAQNASYSAVIVYNNEGDDLEQMSAENITGIRIPSVFVGHTTGKALATYFTTEVVLIINDELPFNINTQLILPFSILIGMCFIIMVIYMIYKCIREQRRLRRHRLPKSMLKKLPVLRYTKNNANNKYDTCVICLEDFIEDDKLRVLPCSHPYHTHCIDPWLTENRRVCPICKRKVFTKGEARASRSRQPSLDNVTDTDDDTTPLLQQQQSNGRQVGQVSSASSAGGAAGSSSSVAAAAVAGTTRHGTFRRGHAGRNPFEESQSSDDENALLASTVRPATSSGAHERINPFDRAPNLPAHLAEQLTESRRSVWSRINFASFFRRQPAVISVAAPPYLERVESGTSAMGLPVTGTIAVASPASNNILNPNLSGSFKDEDDMPPHRSIYEPIAISTPAADSATVDDSAFLQTPTQGGIGVAALPHSASDRQFLI</sequence>
<keyword id="KW-0967">Endosome</keyword>
<keyword id="KW-0325">Glycoprotein</keyword>
<keyword id="KW-0472">Membrane</keyword>
<keyword id="KW-0479">Metal-binding</keyword>
<keyword id="KW-1185">Reference proteome</keyword>
<keyword id="KW-0732">Signal</keyword>
<keyword id="KW-0808">Transferase</keyword>
<keyword id="KW-0812">Transmembrane</keyword>
<keyword id="KW-1133">Transmembrane helix</keyword>
<keyword id="KW-0833">Ubl conjugation pathway</keyword>
<keyword id="KW-0862">Zinc</keyword>
<keyword id="KW-0863">Zinc-finger</keyword>
<evidence type="ECO:0000255" key="1"/>
<evidence type="ECO:0000255" key="2">
    <source>
        <dbReference type="PROSITE-ProRule" id="PRU00175"/>
    </source>
</evidence>
<evidence type="ECO:0000255" key="3">
    <source>
        <dbReference type="PROSITE-ProRule" id="PRU00498"/>
    </source>
</evidence>
<evidence type="ECO:0000256" key="4">
    <source>
        <dbReference type="SAM" id="MobiDB-lite"/>
    </source>
</evidence>
<evidence type="ECO:0000269" key="5">
    <source>
    </source>
</evidence>
<evidence type="ECO:0000269" key="6">
    <source>
    </source>
</evidence>
<evidence type="ECO:0000303" key="7">
    <source>
    </source>
</evidence>
<evidence type="ECO:0000305" key="8"/>
<evidence type="ECO:0000312" key="9">
    <source>
        <dbReference type="FlyBase" id="FBgn0037442"/>
    </source>
</evidence>
<accession>Q9VI20</accession>
<accession>Q8T089</accession>
<reference key="1">
    <citation type="journal article" date="2000" name="Science">
        <title>The genome sequence of Drosophila melanogaster.</title>
        <authorList>
            <person name="Adams M.D."/>
            <person name="Celniker S.E."/>
            <person name="Holt R.A."/>
            <person name="Evans C.A."/>
            <person name="Gocayne J.D."/>
            <person name="Amanatides P.G."/>
            <person name="Scherer S.E."/>
            <person name="Li P.W."/>
            <person name="Hoskins R.A."/>
            <person name="Galle R.F."/>
            <person name="George R.A."/>
            <person name="Lewis S.E."/>
            <person name="Richards S."/>
            <person name="Ashburner M."/>
            <person name="Henderson S.N."/>
            <person name="Sutton G.G."/>
            <person name="Wortman J.R."/>
            <person name="Yandell M.D."/>
            <person name="Zhang Q."/>
            <person name="Chen L.X."/>
            <person name="Brandon R.C."/>
            <person name="Rogers Y.-H.C."/>
            <person name="Blazej R.G."/>
            <person name="Champe M."/>
            <person name="Pfeiffer B.D."/>
            <person name="Wan K.H."/>
            <person name="Doyle C."/>
            <person name="Baxter E.G."/>
            <person name="Helt G."/>
            <person name="Nelson C.R."/>
            <person name="Miklos G.L.G."/>
            <person name="Abril J.F."/>
            <person name="Agbayani A."/>
            <person name="An H.-J."/>
            <person name="Andrews-Pfannkoch C."/>
            <person name="Baldwin D."/>
            <person name="Ballew R.M."/>
            <person name="Basu A."/>
            <person name="Baxendale J."/>
            <person name="Bayraktaroglu L."/>
            <person name="Beasley E.M."/>
            <person name="Beeson K.Y."/>
            <person name="Benos P.V."/>
            <person name="Berman B.P."/>
            <person name="Bhandari D."/>
            <person name="Bolshakov S."/>
            <person name="Borkova D."/>
            <person name="Botchan M.R."/>
            <person name="Bouck J."/>
            <person name="Brokstein P."/>
            <person name="Brottier P."/>
            <person name="Burtis K.C."/>
            <person name="Busam D.A."/>
            <person name="Butler H."/>
            <person name="Cadieu E."/>
            <person name="Center A."/>
            <person name="Chandra I."/>
            <person name="Cherry J.M."/>
            <person name="Cawley S."/>
            <person name="Dahlke C."/>
            <person name="Davenport L.B."/>
            <person name="Davies P."/>
            <person name="de Pablos B."/>
            <person name="Delcher A."/>
            <person name="Deng Z."/>
            <person name="Mays A.D."/>
            <person name="Dew I."/>
            <person name="Dietz S.M."/>
            <person name="Dodson K."/>
            <person name="Doup L.E."/>
            <person name="Downes M."/>
            <person name="Dugan-Rocha S."/>
            <person name="Dunkov B.C."/>
            <person name="Dunn P."/>
            <person name="Durbin K.J."/>
            <person name="Evangelista C.C."/>
            <person name="Ferraz C."/>
            <person name="Ferriera S."/>
            <person name="Fleischmann W."/>
            <person name="Fosler C."/>
            <person name="Gabrielian A.E."/>
            <person name="Garg N.S."/>
            <person name="Gelbart W.M."/>
            <person name="Glasser K."/>
            <person name="Glodek A."/>
            <person name="Gong F."/>
            <person name="Gorrell J.H."/>
            <person name="Gu Z."/>
            <person name="Guan P."/>
            <person name="Harris M."/>
            <person name="Harris N.L."/>
            <person name="Harvey D.A."/>
            <person name="Heiman T.J."/>
            <person name="Hernandez J.R."/>
            <person name="Houck J."/>
            <person name="Hostin D."/>
            <person name="Houston K.A."/>
            <person name="Howland T.J."/>
            <person name="Wei M.-H."/>
            <person name="Ibegwam C."/>
            <person name="Jalali M."/>
            <person name="Kalush F."/>
            <person name="Karpen G.H."/>
            <person name="Ke Z."/>
            <person name="Kennison J.A."/>
            <person name="Ketchum K.A."/>
            <person name="Kimmel B.E."/>
            <person name="Kodira C.D."/>
            <person name="Kraft C.L."/>
            <person name="Kravitz S."/>
            <person name="Kulp D."/>
            <person name="Lai Z."/>
            <person name="Lasko P."/>
            <person name="Lei Y."/>
            <person name="Levitsky A.A."/>
            <person name="Li J.H."/>
            <person name="Li Z."/>
            <person name="Liang Y."/>
            <person name="Lin X."/>
            <person name="Liu X."/>
            <person name="Mattei B."/>
            <person name="McIntosh T.C."/>
            <person name="McLeod M.P."/>
            <person name="McPherson D."/>
            <person name="Merkulov G."/>
            <person name="Milshina N.V."/>
            <person name="Mobarry C."/>
            <person name="Morris J."/>
            <person name="Moshrefi A."/>
            <person name="Mount S.M."/>
            <person name="Moy M."/>
            <person name="Murphy B."/>
            <person name="Murphy L."/>
            <person name="Muzny D.M."/>
            <person name="Nelson D.L."/>
            <person name="Nelson D.R."/>
            <person name="Nelson K.A."/>
            <person name="Nixon K."/>
            <person name="Nusskern D.R."/>
            <person name="Pacleb J.M."/>
            <person name="Palazzolo M."/>
            <person name="Pittman G.S."/>
            <person name="Pan S."/>
            <person name="Pollard J."/>
            <person name="Puri V."/>
            <person name="Reese M.G."/>
            <person name="Reinert K."/>
            <person name="Remington K."/>
            <person name="Saunders R.D.C."/>
            <person name="Scheeler F."/>
            <person name="Shen H."/>
            <person name="Shue B.C."/>
            <person name="Siden-Kiamos I."/>
            <person name="Simpson M."/>
            <person name="Skupski M.P."/>
            <person name="Smith T.J."/>
            <person name="Spier E."/>
            <person name="Spradling A.C."/>
            <person name="Stapleton M."/>
            <person name="Strong R."/>
            <person name="Sun E."/>
            <person name="Svirskas R."/>
            <person name="Tector C."/>
            <person name="Turner R."/>
            <person name="Venter E."/>
            <person name="Wang A.H."/>
            <person name="Wang X."/>
            <person name="Wang Z.-Y."/>
            <person name="Wassarman D.A."/>
            <person name="Weinstock G.M."/>
            <person name="Weissenbach J."/>
            <person name="Williams S.M."/>
            <person name="Woodage T."/>
            <person name="Worley K.C."/>
            <person name="Wu D."/>
            <person name="Yang S."/>
            <person name="Yao Q.A."/>
            <person name="Ye J."/>
            <person name="Yeh R.-F."/>
            <person name="Zaveri J.S."/>
            <person name="Zhan M."/>
            <person name="Zhang G."/>
            <person name="Zhao Q."/>
            <person name="Zheng L."/>
            <person name="Zheng X.H."/>
            <person name="Zhong F.N."/>
            <person name="Zhong W."/>
            <person name="Zhou X."/>
            <person name="Zhu S.C."/>
            <person name="Zhu X."/>
            <person name="Smith H.O."/>
            <person name="Gibbs R.A."/>
            <person name="Myers E.W."/>
            <person name="Rubin G.M."/>
            <person name="Venter J.C."/>
        </authorList>
    </citation>
    <scope>NUCLEOTIDE SEQUENCE [LARGE SCALE GENOMIC DNA]</scope>
    <source>
        <strain>Berkeley</strain>
    </source>
</reference>
<reference key="2">
    <citation type="journal article" date="2002" name="Genome Biol.">
        <title>Annotation of the Drosophila melanogaster euchromatic genome: a systematic review.</title>
        <authorList>
            <person name="Misra S."/>
            <person name="Crosby M.A."/>
            <person name="Mungall C.J."/>
            <person name="Matthews B.B."/>
            <person name="Campbell K.S."/>
            <person name="Hradecky P."/>
            <person name="Huang Y."/>
            <person name="Kaminker J.S."/>
            <person name="Millburn G.H."/>
            <person name="Prochnik S.E."/>
            <person name="Smith C.D."/>
            <person name="Tupy J.L."/>
            <person name="Whitfield E.J."/>
            <person name="Bayraktaroglu L."/>
            <person name="Berman B.P."/>
            <person name="Bettencourt B.R."/>
            <person name="Celniker S.E."/>
            <person name="de Grey A.D.N.J."/>
            <person name="Drysdale R.A."/>
            <person name="Harris N.L."/>
            <person name="Richter J."/>
            <person name="Russo S."/>
            <person name="Schroeder A.J."/>
            <person name="Shu S.Q."/>
            <person name="Stapleton M."/>
            <person name="Yamada C."/>
            <person name="Ashburner M."/>
            <person name="Gelbart W.M."/>
            <person name="Rubin G.M."/>
            <person name="Lewis S.E."/>
        </authorList>
    </citation>
    <scope>GENOME REANNOTATION</scope>
    <source>
        <strain>Berkeley</strain>
    </source>
</reference>
<reference key="3">
    <citation type="submission" date="2012-01" db="EMBL/GenBank/DDBJ databases">
        <authorList>
            <person name="Carlson J."/>
            <person name="Booth B."/>
            <person name="Frise E."/>
            <person name="Park S."/>
            <person name="Wan K."/>
            <person name="Yu C."/>
            <person name="Celniker S."/>
        </authorList>
    </citation>
    <scope>NUCLEOTIDE SEQUENCE [LARGE SCALE MRNA]</scope>
</reference>
<reference key="4">
    <citation type="journal article" date="2002" name="Genome Biol.">
        <title>A Drosophila full-length cDNA resource.</title>
        <authorList>
            <person name="Stapleton M."/>
            <person name="Carlson J.W."/>
            <person name="Brokstein P."/>
            <person name="Yu C."/>
            <person name="Champe M."/>
            <person name="George R.A."/>
            <person name="Guarin H."/>
            <person name="Kronmiller B."/>
            <person name="Pacleb J.M."/>
            <person name="Park S."/>
            <person name="Wan K.H."/>
            <person name="Rubin G.M."/>
            <person name="Celniker S.E."/>
        </authorList>
    </citation>
    <scope>NUCLEOTIDE SEQUENCE [LARGE SCALE MRNA] OF 171-536</scope>
    <source>
        <strain>Berkeley</strain>
        <tissue>Embryo</tissue>
    </source>
</reference>
<reference key="5">
    <citation type="journal article" date="2013" name="EMBO J.">
        <title>Goliath family E3 ligases regulate the recycling endosome pathway via VAMP3 ubiquitylation.</title>
        <authorList>
            <person name="Yamazaki Y."/>
            <person name="Schoenherr C."/>
            <person name="Varshney G.K."/>
            <person name="Dogru M."/>
            <person name="Hallberg B."/>
            <person name="Palmer R.H."/>
        </authorList>
    </citation>
    <scope>FUNCTION</scope>
    <scope>CATALYTIC ACTIVITY</scope>
    <scope>PATHWAY</scope>
    <scope>SUBCELLULAR LOCATION</scope>
    <scope>DISRUPTION PHENOTYPE</scope>
    <scope>MUTAGENESIS OF 255-HIS--HIS-258</scope>
</reference>
<reference key="6">
    <citation type="journal article" date="2016" name="Nat. Cell Biol.">
        <title>Godzilla-dependent transcytosis promotes Wingless signalling in Drosophila wing imaginal discs.</title>
        <authorList>
            <person name="Yamazaki Y."/>
            <person name="Palmer L."/>
            <person name="Alexandre C."/>
            <person name="Kakugawa S."/>
            <person name="Beckett K."/>
            <person name="Gaugue I."/>
            <person name="Palmer R.H."/>
            <person name="Vincent J.P."/>
        </authorList>
    </citation>
    <scope>FUNCTION</scope>
    <scope>CATALYTIC ACTIVITY</scope>
    <scope>MUTAGENESIS OF 255-HIS--HIS-258</scope>
</reference>
<gene>
    <name evidence="7 9" type="primary">gzl</name>
    <name evidence="9" type="ORF">CG10277</name>
</gene>
<protein>
    <recommendedName>
        <fullName evidence="8">E3 ubiquitin-protein ligase Godzilla</fullName>
        <ecNumber evidence="5 6">2.3.2.27</ecNumber>
    </recommendedName>
</protein>
<feature type="signal peptide" evidence="1">
    <location>
        <begin position="1"/>
        <end position="21"/>
    </location>
</feature>
<feature type="chain" id="PRO_5015100278" description="E3 ubiquitin-protein ligase Godzilla" evidence="1">
    <location>
        <begin position="22"/>
        <end position="536"/>
    </location>
</feature>
<feature type="topological domain" description="Extracellular" evidence="8">
    <location>
        <begin position="22"/>
        <end position="174"/>
    </location>
</feature>
<feature type="transmembrane region" description="Helical" evidence="1">
    <location>
        <begin position="175"/>
        <end position="195"/>
    </location>
</feature>
<feature type="topological domain" description="Cytoplasmic" evidence="8">
    <location>
        <begin position="196"/>
        <end position="536"/>
    </location>
</feature>
<feature type="domain" description="PA" evidence="1">
    <location>
        <begin position="89"/>
        <end position="151"/>
    </location>
</feature>
<feature type="zinc finger region" description="RING-type; atypical" evidence="2">
    <location>
        <begin position="235"/>
        <end position="277"/>
    </location>
</feature>
<feature type="region of interest" description="Disordered" evidence="4">
    <location>
        <begin position="287"/>
        <end position="334"/>
    </location>
</feature>
<feature type="region of interest" description="Disordered" evidence="4">
    <location>
        <begin position="350"/>
        <end position="372"/>
    </location>
</feature>
<feature type="compositionally biased region" description="Low complexity" evidence="4">
    <location>
        <begin position="307"/>
        <end position="334"/>
    </location>
</feature>
<feature type="glycosylation site" description="N-linked (GlcNAc...) asparagine" evidence="3">
    <location>
        <position position="109"/>
    </location>
</feature>
<feature type="glycosylation site" description="N-linked (GlcNAc...) asparagine" evidence="3">
    <location>
        <position position="132"/>
    </location>
</feature>
<feature type="mutagenesis site" description="Abolished E3 ubiquitin-protein ligase activity and ability to ubiquitinate Syb. Impaired ability to promote transcytosis of wg." evidence="5 6">
    <original>HPYH</original>
    <variation>RPYR</variation>
    <location>
        <begin position="255"/>
        <end position="258"/>
    </location>
</feature>
<comment type="function">
    <text evidence="5 6">Endosomal E3 ubiquitin-protein ligase that regulates the recycling endosome pathway by mediating ubiquitination of Synaptobrevin (Syb) (PubMed:23353890). Also acts as a regulator of transcytosis in wing imaginal disks by catalyzing ubiquitination of Syb: ubiquitination of Syb promotes transcytosis of wingless (wg) to the basolateral surface (PubMed:26974662).</text>
</comment>
<comment type="catalytic activity">
    <reaction evidence="5 6">
        <text>S-ubiquitinyl-[E2 ubiquitin-conjugating enzyme]-L-cysteine + [acceptor protein]-L-lysine = [E2 ubiquitin-conjugating enzyme]-L-cysteine + N(6)-ubiquitinyl-[acceptor protein]-L-lysine.</text>
        <dbReference type="EC" id="2.3.2.27"/>
    </reaction>
</comment>
<comment type="pathway">
    <text evidence="5">Protein modification; protein ubiquitination.</text>
</comment>
<comment type="subcellular location">
    <subcellularLocation>
        <location evidence="5">Endosome membrane</location>
        <topology evidence="1">Single-pass type I membrane protein</topology>
    </subcellularLocation>
</comment>
<comment type="disruption phenotype">
    <text evidence="5">Larval lethality.</text>
</comment>
<comment type="similarity">
    <text evidence="8">Belongs to the Godzilla family.</text>
</comment>
<name>GZL_DROME</name>
<proteinExistence type="evidence at protein level"/>